<name>RSMA_PROM3</name>
<feature type="chain" id="PRO_1000056652" description="Ribosomal RNA small subunit methyltransferase A">
    <location>
        <begin position="1"/>
        <end position="280"/>
    </location>
</feature>
<feature type="binding site" evidence="1">
    <location>
        <position position="15"/>
    </location>
    <ligand>
        <name>S-adenosyl-L-methionine</name>
        <dbReference type="ChEBI" id="CHEBI:59789"/>
    </ligand>
</feature>
<feature type="binding site" evidence="1">
    <location>
        <position position="17"/>
    </location>
    <ligand>
        <name>S-adenosyl-L-methionine</name>
        <dbReference type="ChEBI" id="CHEBI:59789"/>
    </ligand>
</feature>
<feature type="binding site" evidence="1">
    <location>
        <position position="42"/>
    </location>
    <ligand>
        <name>S-adenosyl-L-methionine</name>
        <dbReference type="ChEBI" id="CHEBI:59789"/>
    </ligand>
</feature>
<feature type="binding site" evidence="1">
    <location>
        <position position="64"/>
    </location>
    <ligand>
        <name>S-adenosyl-L-methionine</name>
        <dbReference type="ChEBI" id="CHEBI:59789"/>
    </ligand>
</feature>
<feature type="binding site" evidence="1">
    <location>
        <position position="89"/>
    </location>
    <ligand>
        <name>S-adenosyl-L-methionine</name>
        <dbReference type="ChEBI" id="CHEBI:59789"/>
    </ligand>
</feature>
<feature type="binding site" evidence="1">
    <location>
        <position position="109"/>
    </location>
    <ligand>
        <name>S-adenosyl-L-methionine</name>
        <dbReference type="ChEBI" id="CHEBI:59789"/>
    </ligand>
</feature>
<evidence type="ECO:0000255" key="1">
    <source>
        <dbReference type="HAMAP-Rule" id="MF_00607"/>
    </source>
</evidence>
<accession>A2CA51</accession>
<organism>
    <name type="scientific">Prochlorococcus marinus (strain MIT 9303)</name>
    <dbReference type="NCBI Taxonomy" id="59922"/>
    <lineage>
        <taxon>Bacteria</taxon>
        <taxon>Bacillati</taxon>
        <taxon>Cyanobacteriota</taxon>
        <taxon>Cyanophyceae</taxon>
        <taxon>Synechococcales</taxon>
        <taxon>Prochlorococcaceae</taxon>
        <taxon>Prochlorococcus</taxon>
    </lineage>
</organism>
<reference key="1">
    <citation type="journal article" date="2007" name="PLoS Genet.">
        <title>Patterns and implications of gene gain and loss in the evolution of Prochlorococcus.</title>
        <authorList>
            <person name="Kettler G.C."/>
            <person name="Martiny A.C."/>
            <person name="Huang K."/>
            <person name="Zucker J."/>
            <person name="Coleman M.L."/>
            <person name="Rodrigue S."/>
            <person name="Chen F."/>
            <person name="Lapidus A."/>
            <person name="Ferriera S."/>
            <person name="Johnson J."/>
            <person name="Steglich C."/>
            <person name="Church G.M."/>
            <person name="Richardson P."/>
            <person name="Chisholm S.W."/>
        </authorList>
    </citation>
    <scope>NUCLEOTIDE SEQUENCE [LARGE SCALE GENOMIC DNA]</scope>
    <source>
        <strain>MIT 9303</strain>
    </source>
</reference>
<protein>
    <recommendedName>
        <fullName evidence="1">Ribosomal RNA small subunit methyltransferase A</fullName>
        <ecNumber evidence="1">2.1.1.182</ecNumber>
    </recommendedName>
    <alternativeName>
        <fullName evidence="1">16S rRNA (adenine(1518)-N(6)/adenine(1519)-N(6))-dimethyltransferase</fullName>
    </alternativeName>
    <alternativeName>
        <fullName evidence="1">16S rRNA dimethyladenosine transferase</fullName>
    </alternativeName>
    <alternativeName>
        <fullName evidence="1">16S rRNA dimethylase</fullName>
    </alternativeName>
    <alternativeName>
        <fullName evidence="1">S-adenosylmethionine-6-N', N'-adenosyl(rRNA) dimethyltransferase</fullName>
    </alternativeName>
</protein>
<gene>
    <name evidence="1" type="primary">rsmA</name>
    <name evidence="1" type="synonym">ksgA</name>
    <name type="ordered locus">P9303_16171</name>
</gene>
<comment type="function">
    <text evidence="1">Specifically dimethylates two adjacent adenosines (A1518 and A1519) in the loop of a conserved hairpin near the 3'-end of 16S rRNA in the 30S particle. May play a critical role in biogenesis of 30S subunits.</text>
</comment>
<comment type="catalytic activity">
    <reaction evidence="1">
        <text>adenosine(1518)/adenosine(1519) in 16S rRNA + 4 S-adenosyl-L-methionine = N(6)-dimethyladenosine(1518)/N(6)-dimethyladenosine(1519) in 16S rRNA + 4 S-adenosyl-L-homocysteine + 4 H(+)</text>
        <dbReference type="Rhea" id="RHEA:19609"/>
        <dbReference type="Rhea" id="RHEA-COMP:10232"/>
        <dbReference type="Rhea" id="RHEA-COMP:10233"/>
        <dbReference type="ChEBI" id="CHEBI:15378"/>
        <dbReference type="ChEBI" id="CHEBI:57856"/>
        <dbReference type="ChEBI" id="CHEBI:59789"/>
        <dbReference type="ChEBI" id="CHEBI:74411"/>
        <dbReference type="ChEBI" id="CHEBI:74493"/>
        <dbReference type="EC" id="2.1.1.182"/>
    </reaction>
</comment>
<comment type="subcellular location">
    <subcellularLocation>
        <location evidence="1">Cytoplasm</location>
    </subcellularLocation>
</comment>
<comment type="similarity">
    <text evidence="1">Belongs to the class I-like SAM-binding methyltransferase superfamily. rRNA adenine N(6)-methyltransferase family. RsmA subfamily.</text>
</comment>
<dbReference type="EC" id="2.1.1.182" evidence="1"/>
<dbReference type="EMBL" id="CP000554">
    <property type="protein sequence ID" value="ABM78361.1"/>
    <property type="molecule type" value="Genomic_DNA"/>
</dbReference>
<dbReference type="RefSeq" id="WP_011826250.1">
    <property type="nucleotide sequence ID" value="NC_008820.1"/>
</dbReference>
<dbReference type="SMR" id="A2CA51"/>
<dbReference type="STRING" id="59922.P9303_16171"/>
<dbReference type="KEGG" id="pmf:P9303_16171"/>
<dbReference type="HOGENOM" id="CLU_041220_0_1_3"/>
<dbReference type="BioCyc" id="PMAR59922:G1G80-1409-MONOMER"/>
<dbReference type="Proteomes" id="UP000002274">
    <property type="component" value="Chromosome"/>
</dbReference>
<dbReference type="GO" id="GO:0005829">
    <property type="term" value="C:cytosol"/>
    <property type="evidence" value="ECO:0007669"/>
    <property type="project" value="TreeGrafter"/>
</dbReference>
<dbReference type="GO" id="GO:0052908">
    <property type="term" value="F:16S rRNA (adenine(1518)-N(6)/adenine(1519)-N(6))-dimethyltransferase activity"/>
    <property type="evidence" value="ECO:0007669"/>
    <property type="project" value="UniProtKB-EC"/>
</dbReference>
<dbReference type="GO" id="GO:0003723">
    <property type="term" value="F:RNA binding"/>
    <property type="evidence" value="ECO:0007669"/>
    <property type="project" value="UniProtKB-KW"/>
</dbReference>
<dbReference type="CDD" id="cd02440">
    <property type="entry name" value="AdoMet_MTases"/>
    <property type="match status" value="1"/>
</dbReference>
<dbReference type="Gene3D" id="1.10.8.100">
    <property type="entry name" value="Ribosomal RNA adenine dimethylase-like, domain 2"/>
    <property type="match status" value="1"/>
</dbReference>
<dbReference type="Gene3D" id="3.40.50.150">
    <property type="entry name" value="Vaccinia Virus protein VP39"/>
    <property type="match status" value="1"/>
</dbReference>
<dbReference type="HAMAP" id="MF_00607">
    <property type="entry name" value="16SrRNA_methyltr_A"/>
    <property type="match status" value="1"/>
</dbReference>
<dbReference type="InterPro" id="IPR001737">
    <property type="entry name" value="KsgA/Erm"/>
</dbReference>
<dbReference type="InterPro" id="IPR023165">
    <property type="entry name" value="rRNA_Ade_diMease-like_C"/>
</dbReference>
<dbReference type="InterPro" id="IPR020596">
    <property type="entry name" value="rRNA_Ade_Mease_Trfase_CS"/>
</dbReference>
<dbReference type="InterPro" id="IPR020598">
    <property type="entry name" value="rRNA_Ade_methylase_Trfase_N"/>
</dbReference>
<dbReference type="InterPro" id="IPR011530">
    <property type="entry name" value="rRNA_adenine_dimethylase"/>
</dbReference>
<dbReference type="InterPro" id="IPR029063">
    <property type="entry name" value="SAM-dependent_MTases_sf"/>
</dbReference>
<dbReference type="NCBIfam" id="TIGR00755">
    <property type="entry name" value="ksgA"/>
    <property type="match status" value="1"/>
</dbReference>
<dbReference type="PANTHER" id="PTHR11727">
    <property type="entry name" value="DIMETHYLADENOSINE TRANSFERASE"/>
    <property type="match status" value="1"/>
</dbReference>
<dbReference type="PANTHER" id="PTHR11727:SF7">
    <property type="entry name" value="DIMETHYLADENOSINE TRANSFERASE-RELATED"/>
    <property type="match status" value="1"/>
</dbReference>
<dbReference type="Pfam" id="PF00398">
    <property type="entry name" value="RrnaAD"/>
    <property type="match status" value="1"/>
</dbReference>
<dbReference type="SMART" id="SM00650">
    <property type="entry name" value="rADc"/>
    <property type="match status" value="1"/>
</dbReference>
<dbReference type="SUPFAM" id="SSF53335">
    <property type="entry name" value="S-adenosyl-L-methionine-dependent methyltransferases"/>
    <property type="match status" value="1"/>
</dbReference>
<dbReference type="PROSITE" id="PS01131">
    <property type="entry name" value="RRNA_A_DIMETH"/>
    <property type="match status" value="1"/>
</dbReference>
<dbReference type="PROSITE" id="PS51689">
    <property type="entry name" value="SAM_RNA_A_N6_MT"/>
    <property type="match status" value="1"/>
</dbReference>
<proteinExistence type="inferred from homology"/>
<sequence length="280" mass="30905">MAFSGHHARKRFAQHWLIDAAVLTQILDAADVQPDDRLLEVGPGRGALTERLLASSASAVHAVELDRDLVSGLRQRFADQARFSLQEGDVLSVPLTLADGRAANKVVANIPYNITGPLLERLLGRLDRPVDHPYQRLVLLLQKEVAQRIRALPGQSCFSALSVRLQLLAHCTTVCPVPPRSFKPPPKVHSEVILIEPLAPEQRLEPLLAKRVESLLRQAFLARRKMLRNTLAKVLPAAELNALADDLGISLQQRPQELSPATWVELARGLNRADLVDPEP</sequence>
<keyword id="KW-0963">Cytoplasm</keyword>
<keyword id="KW-0489">Methyltransferase</keyword>
<keyword id="KW-0694">RNA-binding</keyword>
<keyword id="KW-0698">rRNA processing</keyword>
<keyword id="KW-0949">S-adenosyl-L-methionine</keyword>
<keyword id="KW-0808">Transferase</keyword>